<gene>
    <name evidence="1" type="primary">ispF</name>
    <name type="ordered locus">PST_1566</name>
</gene>
<protein>
    <recommendedName>
        <fullName evidence="1">2-C-methyl-D-erythritol 2,4-cyclodiphosphate synthase</fullName>
        <shortName evidence="1">MECDP-synthase</shortName>
        <shortName evidence="1">MECPP-synthase</shortName>
        <shortName evidence="1">MECPS</shortName>
        <ecNumber evidence="1">4.6.1.12</ecNumber>
    </recommendedName>
</protein>
<comment type="function">
    <text evidence="1">Involved in the biosynthesis of isopentenyl diphosphate (IPP) and dimethylallyl diphosphate (DMAPP), two major building blocks of isoprenoid compounds. Catalyzes the conversion of 4-diphosphocytidyl-2-C-methyl-D-erythritol 2-phosphate (CDP-ME2P) to 2-C-methyl-D-erythritol 2,4-cyclodiphosphate (ME-CPP) with a corresponding release of cytidine 5-monophosphate (CMP).</text>
</comment>
<comment type="catalytic activity">
    <reaction evidence="1">
        <text>4-CDP-2-C-methyl-D-erythritol 2-phosphate = 2-C-methyl-D-erythritol 2,4-cyclic diphosphate + CMP</text>
        <dbReference type="Rhea" id="RHEA:23864"/>
        <dbReference type="ChEBI" id="CHEBI:57919"/>
        <dbReference type="ChEBI" id="CHEBI:58483"/>
        <dbReference type="ChEBI" id="CHEBI:60377"/>
        <dbReference type="EC" id="4.6.1.12"/>
    </reaction>
</comment>
<comment type="cofactor">
    <cofactor evidence="1">
        <name>a divalent metal cation</name>
        <dbReference type="ChEBI" id="CHEBI:60240"/>
    </cofactor>
    <text evidence="1">Binds 1 divalent metal cation per subunit.</text>
</comment>
<comment type="pathway">
    <text evidence="1">Isoprenoid biosynthesis; isopentenyl diphosphate biosynthesis via DXP pathway; isopentenyl diphosphate from 1-deoxy-D-xylulose 5-phosphate: step 4/6.</text>
</comment>
<comment type="subunit">
    <text evidence="1">Homotrimer.</text>
</comment>
<comment type="similarity">
    <text evidence="1">Belongs to the IspF family.</text>
</comment>
<dbReference type="EC" id="4.6.1.12" evidence="1"/>
<dbReference type="EMBL" id="CP000304">
    <property type="protein sequence ID" value="ABP79251.1"/>
    <property type="molecule type" value="Genomic_DNA"/>
</dbReference>
<dbReference type="RefSeq" id="WP_011912729.1">
    <property type="nucleotide sequence ID" value="NC_009434.1"/>
</dbReference>
<dbReference type="SMR" id="A4VJV0"/>
<dbReference type="GeneID" id="66820713"/>
<dbReference type="KEGG" id="psa:PST_1566"/>
<dbReference type="eggNOG" id="COG0245">
    <property type="taxonomic scope" value="Bacteria"/>
</dbReference>
<dbReference type="HOGENOM" id="CLU_084630_2_0_6"/>
<dbReference type="UniPathway" id="UPA00056">
    <property type="reaction ID" value="UER00095"/>
</dbReference>
<dbReference type="Proteomes" id="UP000000233">
    <property type="component" value="Chromosome"/>
</dbReference>
<dbReference type="GO" id="GO:0008685">
    <property type="term" value="F:2-C-methyl-D-erythritol 2,4-cyclodiphosphate synthase activity"/>
    <property type="evidence" value="ECO:0007669"/>
    <property type="project" value="UniProtKB-UniRule"/>
</dbReference>
<dbReference type="GO" id="GO:0046872">
    <property type="term" value="F:metal ion binding"/>
    <property type="evidence" value="ECO:0007669"/>
    <property type="project" value="UniProtKB-KW"/>
</dbReference>
<dbReference type="GO" id="GO:0019288">
    <property type="term" value="P:isopentenyl diphosphate biosynthetic process, methylerythritol 4-phosphate pathway"/>
    <property type="evidence" value="ECO:0007669"/>
    <property type="project" value="UniProtKB-UniRule"/>
</dbReference>
<dbReference type="GO" id="GO:0016114">
    <property type="term" value="P:terpenoid biosynthetic process"/>
    <property type="evidence" value="ECO:0007669"/>
    <property type="project" value="InterPro"/>
</dbReference>
<dbReference type="CDD" id="cd00554">
    <property type="entry name" value="MECDP_synthase"/>
    <property type="match status" value="1"/>
</dbReference>
<dbReference type="FunFam" id="3.30.1330.50:FF:000001">
    <property type="entry name" value="2-C-methyl-D-erythritol 2,4-cyclodiphosphate synthase"/>
    <property type="match status" value="1"/>
</dbReference>
<dbReference type="Gene3D" id="3.30.1330.50">
    <property type="entry name" value="2-C-methyl-D-erythritol 2,4-cyclodiphosphate synthase"/>
    <property type="match status" value="1"/>
</dbReference>
<dbReference type="HAMAP" id="MF_00107">
    <property type="entry name" value="IspF"/>
    <property type="match status" value="1"/>
</dbReference>
<dbReference type="InterPro" id="IPR003526">
    <property type="entry name" value="MECDP_synthase"/>
</dbReference>
<dbReference type="InterPro" id="IPR020555">
    <property type="entry name" value="MECDP_synthase_CS"/>
</dbReference>
<dbReference type="InterPro" id="IPR036571">
    <property type="entry name" value="MECDP_synthase_sf"/>
</dbReference>
<dbReference type="NCBIfam" id="TIGR00151">
    <property type="entry name" value="ispF"/>
    <property type="match status" value="1"/>
</dbReference>
<dbReference type="PANTHER" id="PTHR43181">
    <property type="entry name" value="2-C-METHYL-D-ERYTHRITOL 2,4-CYCLODIPHOSPHATE SYNTHASE, CHLOROPLASTIC"/>
    <property type="match status" value="1"/>
</dbReference>
<dbReference type="PANTHER" id="PTHR43181:SF1">
    <property type="entry name" value="2-C-METHYL-D-ERYTHRITOL 2,4-CYCLODIPHOSPHATE SYNTHASE, CHLOROPLASTIC"/>
    <property type="match status" value="1"/>
</dbReference>
<dbReference type="Pfam" id="PF02542">
    <property type="entry name" value="YgbB"/>
    <property type="match status" value="1"/>
</dbReference>
<dbReference type="SUPFAM" id="SSF69765">
    <property type="entry name" value="IpsF-like"/>
    <property type="match status" value="1"/>
</dbReference>
<dbReference type="PROSITE" id="PS01350">
    <property type="entry name" value="ISPF"/>
    <property type="match status" value="1"/>
</dbReference>
<sequence>MRIGHGYDVHRFGEGDHITLGGVRIPHRFGLLAHSDGDVLLHALSDALLGAAALGDIGKHFPDTDPQFKGADSRALLRHVLAQVQAKGYVVGNVDATIVAQAPKMAPHIERMRALIAADLQVELDQVNVKATTTEKLGFTGREEGIAVHAVALLVRP</sequence>
<name>ISPF_STUS1</name>
<proteinExistence type="inferred from homology"/>
<evidence type="ECO:0000255" key="1">
    <source>
        <dbReference type="HAMAP-Rule" id="MF_00107"/>
    </source>
</evidence>
<reference key="1">
    <citation type="journal article" date="2008" name="Proc. Natl. Acad. Sci. U.S.A.">
        <title>Nitrogen fixation island and rhizosphere competence traits in the genome of root-associated Pseudomonas stutzeri A1501.</title>
        <authorList>
            <person name="Yan Y."/>
            <person name="Yang J."/>
            <person name="Dou Y."/>
            <person name="Chen M."/>
            <person name="Ping S."/>
            <person name="Peng J."/>
            <person name="Lu W."/>
            <person name="Zhang W."/>
            <person name="Yao Z."/>
            <person name="Li H."/>
            <person name="Liu W."/>
            <person name="He S."/>
            <person name="Geng L."/>
            <person name="Zhang X."/>
            <person name="Yang F."/>
            <person name="Yu H."/>
            <person name="Zhan Y."/>
            <person name="Li D."/>
            <person name="Lin Z."/>
            <person name="Wang Y."/>
            <person name="Elmerich C."/>
            <person name="Lin M."/>
            <person name="Jin Q."/>
        </authorList>
    </citation>
    <scope>NUCLEOTIDE SEQUENCE [LARGE SCALE GENOMIC DNA]</scope>
    <source>
        <strain>A1501</strain>
    </source>
</reference>
<feature type="chain" id="PRO_1000022865" description="2-C-methyl-D-erythritol 2,4-cyclodiphosphate synthase">
    <location>
        <begin position="1"/>
        <end position="157"/>
    </location>
</feature>
<feature type="binding site" evidence="1">
    <location>
        <begin position="8"/>
        <end position="10"/>
    </location>
    <ligand>
        <name>4-CDP-2-C-methyl-D-erythritol 2-phosphate</name>
        <dbReference type="ChEBI" id="CHEBI:57919"/>
    </ligand>
</feature>
<feature type="binding site" evidence="1">
    <location>
        <position position="8"/>
    </location>
    <ligand>
        <name>a divalent metal cation</name>
        <dbReference type="ChEBI" id="CHEBI:60240"/>
    </ligand>
</feature>
<feature type="binding site" evidence="1">
    <location>
        <position position="10"/>
    </location>
    <ligand>
        <name>a divalent metal cation</name>
        <dbReference type="ChEBI" id="CHEBI:60240"/>
    </ligand>
</feature>
<feature type="binding site" evidence="1">
    <location>
        <begin position="34"/>
        <end position="35"/>
    </location>
    <ligand>
        <name>4-CDP-2-C-methyl-D-erythritol 2-phosphate</name>
        <dbReference type="ChEBI" id="CHEBI:57919"/>
    </ligand>
</feature>
<feature type="binding site" evidence="1">
    <location>
        <position position="42"/>
    </location>
    <ligand>
        <name>a divalent metal cation</name>
        <dbReference type="ChEBI" id="CHEBI:60240"/>
    </ligand>
</feature>
<feature type="binding site" evidence="1">
    <location>
        <begin position="56"/>
        <end position="58"/>
    </location>
    <ligand>
        <name>4-CDP-2-C-methyl-D-erythritol 2-phosphate</name>
        <dbReference type="ChEBI" id="CHEBI:57919"/>
    </ligand>
</feature>
<feature type="binding site" evidence="1">
    <location>
        <begin position="61"/>
        <end position="65"/>
    </location>
    <ligand>
        <name>4-CDP-2-C-methyl-D-erythritol 2-phosphate</name>
        <dbReference type="ChEBI" id="CHEBI:57919"/>
    </ligand>
</feature>
<feature type="binding site" evidence="1">
    <location>
        <begin position="100"/>
        <end position="106"/>
    </location>
    <ligand>
        <name>4-CDP-2-C-methyl-D-erythritol 2-phosphate</name>
        <dbReference type="ChEBI" id="CHEBI:57919"/>
    </ligand>
</feature>
<feature type="binding site" evidence="1">
    <location>
        <begin position="132"/>
        <end position="135"/>
    </location>
    <ligand>
        <name>4-CDP-2-C-methyl-D-erythritol 2-phosphate</name>
        <dbReference type="ChEBI" id="CHEBI:57919"/>
    </ligand>
</feature>
<feature type="binding site" evidence="1">
    <location>
        <position position="139"/>
    </location>
    <ligand>
        <name>4-CDP-2-C-methyl-D-erythritol 2-phosphate</name>
        <dbReference type="ChEBI" id="CHEBI:57919"/>
    </ligand>
</feature>
<feature type="binding site" evidence="1">
    <location>
        <position position="142"/>
    </location>
    <ligand>
        <name>4-CDP-2-C-methyl-D-erythritol 2-phosphate</name>
        <dbReference type="ChEBI" id="CHEBI:57919"/>
    </ligand>
</feature>
<feature type="site" description="Transition state stabilizer" evidence="1">
    <location>
        <position position="34"/>
    </location>
</feature>
<feature type="site" description="Transition state stabilizer" evidence="1">
    <location>
        <position position="133"/>
    </location>
</feature>
<keyword id="KW-0414">Isoprene biosynthesis</keyword>
<keyword id="KW-0456">Lyase</keyword>
<keyword id="KW-0479">Metal-binding</keyword>
<keyword id="KW-1185">Reference proteome</keyword>
<accession>A4VJV0</accession>
<organism>
    <name type="scientific">Stutzerimonas stutzeri (strain A1501)</name>
    <name type="common">Pseudomonas stutzeri</name>
    <dbReference type="NCBI Taxonomy" id="379731"/>
    <lineage>
        <taxon>Bacteria</taxon>
        <taxon>Pseudomonadati</taxon>
        <taxon>Pseudomonadota</taxon>
        <taxon>Gammaproteobacteria</taxon>
        <taxon>Pseudomonadales</taxon>
        <taxon>Pseudomonadaceae</taxon>
        <taxon>Stutzerimonas</taxon>
    </lineage>
</organism>